<proteinExistence type="inferred from homology"/>
<accession>B0B9D6</accession>
<feature type="chain" id="PRO_1000091614" description="Ribonuclease HII">
    <location>
        <begin position="1"/>
        <end position="217"/>
    </location>
</feature>
<feature type="domain" description="RNase H type-2" evidence="2">
    <location>
        <begin position="27"/>
        <end position="216"/>
    </location>
</feature>
<feature type="binding site" evidence="1">
    <location>
        <position position="33"/>
    </location>
    <ligand>
        <name>a divalent metal cation</name>
        <dbReference type="ChEBI" id="CHEBI:60240"/>
    </ligand>
</feature>
<feature type="binding site" evidence="1">
    <location>
        <position position="34"/>
    </location>
    <ligand>
        <name>a divalent metal cation</name>
        <dbReference type="ChEBI" id="CHEBI:60240"/>
    </ligand>
</feature>
<feature type="binding site" evidence="1">
    <location>
        <position position="126"/>
    </location>
    <ligand>
        <name>a divalent metal cation</name>
        <dbReference type="ChEBI" id="CHEBI:60240"/>
    </ligand>
</feature>
<gene>
    <name evidence="1" type="primary">rnhB</name>
    <name type="ordered locus">CTL0284</name>
</gene>
<sequence length="217" mass="23975">MKSTVEQAMLFEEKSIFENQAIEQGYSQVAGVDEAGRGPLAGPVVAGACILPRGKVFLGIDDSKKLTPKQRRYLYELLLEDPEVDCGVGVISVERIDEINILEATKEAMVQAIASLRSTPDFLLVDGLFLPHKIPSLKIIKGDARSVSIAAASIIAKEYRDELMRKLHVEYPEYGFDKHKGYGTAAHLQALKHFGPCVYHRKSFSPVKESIQEGVCQ</sequence>
<evidence type="ECO:0000255" key="1">
    <source>
        <dbReference type="HAMAP-Rule" id="MF_00052"/>
    </source>
</evidence>
<evidence type="ECO:0000255" key="2">
    <source>
        <dbReference type="PROSITE-ProRule" id="PRU01319"/>
    </source>
</evidence>
<organism>
    <name type="scientific">Chlamydia trachomatis serovar L2 (strain ATCC VR-902B / DSM 19102 / 434/Bu)</name>
    <dbReference type="NCBI Taxonomy" id="471472"/>
    <lineage>
        <taxon>Bacteria</taxon>
        <taxon>Pseudomonadati</taxon>
        <taxon>Chlamydiota</taxon>
        <taxon>Chlamydiia</taxon>
        <taxon>Chlamydiales</taxon>
        <taxon>Chlamydiaceae</taxon>
        <taxon>Chlamydia/Chlamydophila group</taxon>
        <taxon>Chlamydia</taxon>
    </lineage>
</organism>
<comment type="function">
    <text evidence="1">Endonuclease that specifically degrades the RNA of RNA-DNA hybrids.</text>
</comment>
<comment type="catalytic activity">
    <reaction evidence="1">
        <text>Endonucleolytic cleavage to 5'-phosphomonoester.</text>
        <dbReference type="EC" id="3.1.26.4"/>
    </reaction>
</comment>
<comment type="cofactor">
    <cofactor evidence="1">
        <name>Mn(2+)</name>
        <dbReference type="ChEBI" id="CHEBI:29035"/>
    </cofactor>
    <cofactor evidence="1">
        <name>Mg(2+)</name>
        <dbReference type="ChEBI" id="CHEBI:18420"/>
    </cofactor>
    <text evidence="1">Manganese or magnesium. Binds 1 divalent metal ion per monomer in the absence of substrate. May bind a second metal ion after substrate binding.</text>
</comment>
<comment type="subcellular location">
    <subcellularLocation>
        <location evidence="1">Cytoplasm</location>
    </subcellularLocation>
</comment>
<comment type="similarity">
    <text evidence="1">Belongs to the RNase HII family.</text>
</comment>
<dbReference type="EC" id="3.1.26.4" evidence="1"/>
<dbReference type="EMBL" id="AM884176">
    <property type="protein sequence ID" value="CAP03723.1"/>
    <property type="molecule type" value="Genomic_DNA"/>
</dbReference>
<dbReference type="RefSeq" id="WP_009873505.1">
    <property type="nucleotide sequence ID" value="NC_010287.1"/>
</dbReference>
<dbReference type="RefSeq" id="YP_001654368.1">
    <property type="nucleotide sequence ID" value="NC_010287.1"/>
</dbReference>
<dbReference type="SMR" id="B0B9D6"/>
<dbReference type="KEGG" id="ctb:CTL0284"/>
<dbReference type="PATRIC" id="fig|471472.4.peg.308"/>
<dbReference type="HOGENOM" id="CLU_036532_2_1_0"/>
<dbReference type="Proteomes" id="UP001154402">
    <property type="component" value="Chromosome"/>
</dbReference>
<dbReference type="GO" id="GO:0005737">
    <property type="term" value="C:cytoplasm"/>
    <property type="evidence" value="ECO:0007669"/>
    <property type="project" value="UniProtKB-SubCell"/>
</dbReference>
<dbReference type="GO" id="GO:0032299">
    <property type="term" value="C:ribonuclease H2 complex"/>
    <property type="evidence" value="ECO:0007669"/>
    <property type="project" value="TreeGrafter"/>
</dbReference>
<dbReference type="GO" id="GO:0030145">
    <property type="term" value="F:manganese ion binding"/>
    <property type="evidence" value="ECO:0007669"/>
    <property type="project" value="UniProtKB-UniRule"/>
</dbReference>
<dbReference type="GO" id="GO:0003723">
    <property type="term" value="F:RNA binding"/>
    <property type="evidence" value="ECO:0007669"/>
    <property type="project" value="InterPro"/>
</dbReference>
<dbReference type="GO" id="GO:0004523">
    <property type="term" value="F:RNA-DNA hybrid ribonuclease activity"/>
    <property type="evidence" value="ECO:0007669"/>
    <property type="project" value="UniProtKB-UniRule"/>
</dbReference>
<dbReference type="GO" id="GO:0043137">
    <property type="term" value="P:DNA replication, removal of RNA primer"/>
    <property type="evidence" value="ECO:0007669"/>
    <property type="project" value="TreeGrafter"/>
</dbReference>
<dbReference type="GO" id="GO:0006298">
    <property type="term" value="P:mismatch repair"/>
    <property type="evidence" value="ECO:0007669"/>
    <property type="project" value="TreeGrafter"/>
</dbReference>
<dbReference type="CDD" id="cd07182">
    <property type="entry name" value="RNase_HII_bacteria_HII_like"/>
    <property type="match status" value="1"/>
</dbReference>
<dbReference type="FunFam" id="3.30.420.10:FF:000006">
    <property type="entry name" value="Ribonuclease HII"/>
    <property type="match status" value="1"/>
</dbReference>
<dbReference type="Gene3D" id="3.30.420.10">
    <property type="entry name" value="Ribonuclease H-like superfamily/Ribonuclease H"/>
    <property type="match status" value="1"/>
</dbReference>
<dbReference type="HAMAP" id="MF_00052_B">
    <property type="entry name" value="RNase_HII_B"/>
    <property type="match status" value="1"/>
</dbReference>
<dbReference type="InterPro" id="IPR022898">
    <property type="entry name" value="RNase_HII"/>
</dbReference>
<dbReference type="InterPro" id="IPR001352">
    <property type="entry name" value="RNase_HII/HIII"/>
</dbReference>
<dbReference type="InterPro" id="IPR024567">
    <property type="entry name" value="RNase_HII/HIII_dom"/>
</dbReference>
<dbReference type="InterPro" id="IPR012337">
    <property type="entry name" value="RNaseH-like_sf"/>
</dbReference>
<dbReference type="InterPro" id="IPR036397">
    <property type="entry name" value="RNaseH_sf"/>
</dbReference>
<dbReference type="NCBIfam" id="NF000594">
    <property type="entry name" value="PRK00015.1-1"/>
    <property type="match status" value="1"/>
</dbReference>
<dbReference type="NCBIfam" id="NF000595">
    <property type="entry name" value="PRK00015.1-3"/>
    <property type="match status" value="1"/>
</dbReference>
<dbReference type="PANTHER" id="PTHR10954">
    <property type="entry name" value="RIBONUCLEASE H2 SUBUNIT A"/>
    <property type="match status" value="1"/>
</dbReference>
<dbReference type="PANTHER" id="PTHR10954:SF18">
    <property type="entry name" value="RIBONUCLEASE HII"/>
    <property type="match status" value="1"/>
</dbReference>
<dbReference type="Pfam" id="PF01351">
    <property type="entry name" value="RNase_HII"/>
    <property type="match status" value="1"/>
</dbReference>
<dbReference type="SUPFAM" id="SSF53098">
    <property type="entry name" value="Ribonuclease H-like"/>
    <property type="match status" value="1"/>
</dbReference>
<dbReference type="PROSITE" id="PS51975">
    <property type="entry name" value="RNASE_H_2"/>
    <property type="match status" value="1"/>
</dbReference>
<name>RNH2_CHLT2</name>
<keyword id="KW-0963">Cytoplasm</keyword>
<keyword id="KW-0255">Endonuclease</keyword>
<keyword id="KW-0378">Hydrolase</keyword>
<keyword id="KW-0464">Manganese</keyword>
<keyword id="KW-0479">Metal-binding</keyword>
<keyword id="KW-0540">Nuclease</keyword>
<protein>
    <recommendedName>
        <fullName evidence="1">Ribonuclease HII</fullName>
        <shortName evidence="1">RNase HII</shortName>
        <ecNumber evidence="1">3.1.26.4</ecNumber>
    </recommendedName>
</protein>
<reference key="1">
    <citation type="journal article" date="2008" name="Genome Res.">
        <title>Chlamydia trachomatis: genome sequence analysis of lymphogranuloma venereum isolates.</title>
        <authorList>
            <person name="Thomson N.R."/>
            <person name="Holden M.T.G."/>
            <person name="Carder C."/>
            <person name="Lennard N."/>
            <person name="Lockey S.J."/>
            <person name="Marsh P."/>
            <person name="Skipp P."/>
            <person name="O'Connor C.D."/>
            <person name="Goodhead I."/>
            <person name="Norbertzcak H."/>
            <person name="Harris B."/>
            <person name="Ormond D."/>
            <person name="Rance R."/>
            <person name="Quail M.A."/>
            <person name="Parkhill J."/>
            <person name="Stephens R.S."/>
            <person name="Clarke I.N."/>
        </authorList>
    </citation>
    <scope>NUCLEOTIDE SEQUENCE [LARGE SCALE GENOMIC DNA]</scope>
    <source>
        <strain>ATCC VR-902B / DSM 19102 / 434/Bu</strain>
    </source>
</reference>